<name>VSPG_GLOUS</name>
<keyword id="KW-1015">Disulfide bond</keyword>
<keyword id="KW-0325">Glycoprotein</keyword>
<keyword id="KW-1199">Hemostasis impairing toxin</keyword>
<keyword id="KW-0378">Hydrolase</keyword>
<keyword id="KW-0645">Protease</keyword>
<keyword id="KW-0964">Secreted</keyword>
<keyword id="KW-0720">Serine protease</keyword>
<keyword id="KW-0732">Signal</keyword>
<keyword id="KW-0800">Toxin</keyword>
<keyword id="KW-0865">Zymogen</keyword>
<comment type="function">
    <text evidence="1">Snake venom serine protease that may act in the hemostasis system of the prey.</text>
</comment>
<comment type="subunit">
    <text evidence="1">Monomer.</text>
</comment>
<comment type="subcellular location">
    <subcellularLocation>
        <location evidence="1">Secreted</location>
    </subcellularLocation>
</comment>
<comment type="tissue specificity">
    <text>Expressed by the venom gland.</text>
</comment>
<comment type="similarity">
    <text evidence="3">Belongs to the peptidase S1 family. Snake venom subfamily.</text>
</comment>
<sequence length="260" mass="28530">MVLIRVLANLLILQLSYAQKSSELIIGGDECNINEHRFLVALYTSRSRRFYCGGTLINQEWVLTAAHCDRKNIRIKLGMHSEKVPNEDAQTRVPKEKFFCLSSKTYTKWDKDIMLMRLKRPVNNSTHIAPVSLPSNPPSVGSVCRVMGWGTITSPQETYPDVPHCANINILDYEVCQAAHGGLPATSRTLCAGILKGGKDSCKGDSGGPLICNGQFQGIASWGAHPCGQSLKPGVYTKVFDYTEWIQSTIAGNTDATCPP</sequence>
<organism>
    <name type="scientific">Gloydius ussuriensis</name>
    <name type="common">Ussuri mamushi</name>
    <name type="synonym">Gloydius blomhoffii ussuriensis</name>
    <dbReference type="NCBI Taxonomy" id="35671"/>
    <lineage>
        <taxon>Eukaryota</taxon>
        <taxon>Metazoa</taxon>
        <taxon>Chordata</taxon>
        <taxon>Craniata</taxon>
        <taxon>Vertebrata</taxon>
        <taxon>Euteleostomi</taxon>
        <taxon>Lepidosauria</taxon>
        <taxon>Squamata</taxon>
        <taxon>Bifurcata</taxon>
        <taxon>Unidentata</taxon>
        <taxon>Episquamata</taxon>
        <taxon>Toxicofera</taxon>
        <taxon>Serpentes</taxon>
        <taxon>Colubroidea</taxon>
        <taxon>Viperidae</taxon>
        <taxon>Crotalinae</taxon>
        <taxon>Gloydius</taxon>
    </lineage>
</organism>
<proteinExistence type="evidence at transcript level"/>
<protein>
    <recommendedName>
        <fullName>Snake venom serine protease gussurobin</fullName>
        <shortName>SVSP</shortName>
        <ecNumber>3.4.21.-</ecNumber>
    </recommendedName>
</protein>
<feature type="signal peptide" evidence="2">
    <location>
        <begin position="1"/>
        <end position="18"/>
    </location>
</feature>
<feature type="propeptide" id="PRO_0000295821" evidence="1">
    <location>
        <begin position="19"/>
        <end position="24"/>
    </location>
</feature>
<feature type="chain" id="PRO_0000295822" description="Snake venom serine protease gussurobin">
    <location>
        <begin position="25"/>
        <end position="260"/>
    </location>
</feature>
<feature type="domain" description="Peptidase S1" evidence="3">
    <location>
        <begin position="25"/>
        <end position="251"/>
    </location>
</feature>
<feature type="active site" description="Charge relay system" evidence="1">
    <location>
        <position position="67"/>
    </location>
</feature>
<feature type="active site" description="Charge relay system" evidence="1">
    <location>
        <position position="112"/>
    </location>
</feature>
<feature type="active site" description="Charge relay system" evidence="1">
    <location>
        <position position="206"/>
    </location>
</feature>
<feature type="glycosylation site" description="N-linked (GlcNAc...) asparagine" evidence="2">
    <location>
        <position position="123"/>
    </location>
</feature>
<feature type="glycosylation site" description="N-linked (GlcNAc...) asparagine" evidence="2">
    <location>
        <position position="124"/>
    </location>
</feature>
<feature type="disulfide bond" evidence="3">
    <location>
        <begin position="31"/>
        <end position="165"/>
    </location>
</feature>
<feature type="disulfide bond" evidence="3">
    <location>
        <begin position="52"/>
        <end position="68"/>
    </location>
</feature>
<feature type="disulfide bond" evidence="3">
    <location>
        <begin position="100"/>
        <end position="258"/>
    </location>
</feature>
<feature type="disulfide bond" evidence="3">
    <location>
        <begin position="144"/>
        <end position="212"/>
    </location>
</feature>
<feature type="disulfide bond" evidence="3">
    <location>
        <begin position="176"/>
        <end position="191"/>
    </location>
</feature>
<feature type="disulfide bond" evidence="3">
    <location>
        <begin position="202"/>
        <end position="227"/>
    </location>
</feature>
<accession>Q8UVX1</accession>
<reference key="1">
    <citation type="submission" date="2001-01" db="EMBL/GenBank/DDBJ databases">
        <title>cDNA for thrombin-like serine protease from venom gland of Agkistrodon ussuriensis.</title>
        <authorList>
            <person name="Zhao Y."/>
            <person name="Fang K."/>
            <person name="Sun K."/>
        </authorList>
    </citation>
    <scope>NUCLEOTIDE SEQUENCE [MRNA]</scope>
    <source>
        <tissue>Venom gland</tissue>
    </source>
</reference>
<reference key="2">
    <citation type="journal article" date="2002" name="Sheng Wu Hua Xue Yu Sheng Wu Wu Li Xue Bao">
        <title>Cloning, expression and purification of gussurobin, a thrombin-like enzyme from the snake venom of Gloydius ussuriensis.</title>
        <authorList>
            <person name="Yang Q."/>
            <person name="Hu X.-J."/>
            <person name="Xu X.-M."/>
            <person name="An L.-J."/>
            <person name="Yuan X.-D."/>
            <person name="Su Z.-G."/>
        </authorList>
    </citation>
    <scope>NUCLEOTIDE SEQUENCE [MRNA]</scope>
    <source>
        <tissue>Venom gland</tissue>
    </source>
</reference>
<evidence type="ECO:0000250" key="1"/>
<evidence type="ECO:0000255" key="2"/>
<evidence type="ECO:0000255" key="3">
    <source>
        <dbReference type="PROSITE-ProRule" id="PRU00274"/>
    </source>
</evidence>
<dbReference type="EC" id="3.4.21.-"/>
<dbReference type="EMBL" id="AF336126">
    <property type="protein sequence ID" value="AAL68708.1"/>
    <property type="molecule type" value="mRNA"/>
</dbReference>
<dbReference type="EMBL" id="AF370124">
    <property type="protein sequence ID" value="AAM46086.1"/>
    <property type="molecule type" value="mRNA"/>
</dbReference>
<dbReference type="SMR" id="Q8UVX1"/>
<dbReference type="MEROPS" id="S01.509"/>
<dbReference type="GO" id="GO:0005576">
    <property type="term" value="C:extracellular region"/>
    <property type="evidence" value="ECO:0007669"/>
    <property type="project" value="UniProtKB-SubCell"/>
</dbReference>
<dbReference type="GO" id="GO:0030141">
    <property type="term" value="C:secretory granule"/>
    <property type="evidence" value="ECO:0007669"/>
    <property type="project" value="TreeGrafter"/>
</dbReference>
<dbReference type="GO" id="GO:0004252">
    <property type="term" value="F:serine-type endopeptidase activity"/>
    <property type="evidence" value="ECO:0007669"/>
    <property type="project" value="InterPro"/>
</dbReference>
<dbReference type="GO" id="GO:0090729">
    <property type="term" value="F:toxin activity"/>
    <property type="evidence" value="ECO:0007669"/>
    <property type="project" value="UniProtKB-KW"/>
</dbReference>
<dbReference type="GO" id="GO:0006508">
    <property type="term" value="P:proteolysis"/>
    <property type="evidence" value="ECO:0007669"/>
    <property type="project" value="UniProtKB-KW"/>
</dbReference>
<dbReference type="CDD" id="cd00190">
    <property type="entry name" value="Tryp_SPc"/>
    <property type="match status" value="1"/>
</dbReference>
<dbReference type="FunFam" id="2.40.10.10:FF:000158">
    <property type="entry name" value="Thrombin-like enzyme saxthrombin"/>
    <property type="match status" value="1"/>
</dbReference>
<dbReference type="FunFam" id="2.40.10.10:FF:000153">
    <property type="entry name" value="Venom plasminogen activator TSV-PA"/>
    <property type="match status" value="1"/>
</dbReference>
<dbReference type="Gene3D" id="2.40.10.10">
    <property type="entry name" value="Trypsin-like serine proteases"/>
    <property type="match status" value="2"/>
</dbReference>
<dbReference type="InterPro" id="IPR009003">
    <property type="entry name" value="Peptidase_S1_PA"/>
</dbReference>
<dbReference type="InterPro" id="IPR043504">
    <property type="entry name" value="Peptidase_S1_PA_chymotrypsin"/>
</dbReference>
<dbReference type="InterPro" id="IPR001314">
    <property type="entry name" value="Peptidase_S1A"/>
</dbReference>
<dbReference type="InterPro" id="IPR001254">
    <property type="entry name" value="Trypsin_dom"/>
</dbReference>
<dbReference type="InterPro" id="IPR018114">
    <property type="entry name" value="TRYPSIN_HIS"/>
</dbReference>
<dbReference type="InterPro" id="IPR033116">
    <property type="entry name" value="TRYPSIN_SER"/>
</dbReference>
<dbReference type="PANTHER" id="PTHR24271:SF47">
    <property type="entry name" value="KALLIKREIN-1"/>
    <property type="match status" value="1"/>
</dbReference>
<dbReference type="PANTHER" id="PTHR24271">
    <property type="entry name" value="KALLIKREIN-RELATED"/>
    <property type="match status" value="1"/>
</dbReference>
<dbReference type="Pfam" id="PF00089">
    <property type="entry name" value="Trypsin"/>
    <property type="match status" value="1"/>
</dbReference>
<dbReference type="PRINTS" id="PR00722">
    <property type="entry name" value="CHYMOTRYPSIN"/>
</dbReference>
<dbReference type="SMART" id="SM00020">
    <property type="entry name" value="Tryp_SPc"/>
    <property type="match status" value="1"/>
</dbReference>
<dbReference type="SUPFAM" id="SSF50494">
    <property type="entry name" value="Trypsin-like serine proteases"/>
    <property type="match status" value="1"/>
</dbReference>
<dbReference type="PROSITE" id="PS50240">
    <property type="entry name" value="TRYPSIN_DOM"/>
    <property type="match status" value="1"/>
</dbReference>
<dbReference type="PROSITE" id="PS00134">
    <property type="entry name" value="TRYPSIN_HIS"/>
    <property type="match status" value="1"/>
</dbReference>
<dbReference type="PROSITE" id="PS00135">
    <property type="entry name" value="TRYPSIN_SER"/>
    <property type="match status" value="1"/>
</dbReference>